<evidence type="ECO:0000255" key="1">
    <source>
        <dbReference type="HAMAP-Rule" id="MF_00514"/>
    </source>
</evidence>
<evidence type="ECO:0000256" key="2">
    <source>
        <dbReference type="SAM" id="MobiDB-lite"/>
    </source>
</evidence>
<evidence type="ECO:0000305" key="3"/>
<sequence>MPKLKTSKAAAKRFKVTGTGKLKRMKAGKQHILTKKSQKTKRNLRKATMMDPSNEKNMKKILPYL</sequence>
<organism>
    <name type="scientific">Lachnoclostridium phytofermentans (strain ATCC 700394 / DSM 18823 / ISDg)</name>
    <name type="common">Clostridium phytofermentans</name>
    <dbReference type="NCBI Taxonomy" id="357809"/>
    <lineage>
        <taxon>Bacteria</taxon>
        <taxon>Bacillati</taxon>
        <taxon>Bacillota</taxon>
        <taxon>Clostridia</taxon>
        <taxon>Lachnospirales</taxon>
        <taxon>Lachnospiraceae</taxon>
    </lineage>
</organism>
<proteinExistence type="inferred from homology"/>
<comment type="similarity">
    <text evidence="1">Belongs to the bacterial ribosomal protein bL35 family.</text>
</comment>
<dbReference type="EMBL" id="CP000885">
    <property type="protein sequence ID" value="ABX40835.1"/>
    <property type="molecule type" value="Genomic_DNA"/>
</dbReference>
<dbReference type="RefSeq" id="WP_012198479.1">
    <property type="nucleotide sequence ID" value="NC_010001.1"/>
</dbReference>
<dbReference type="SMR" id="A9KHG8"/>
<dbReference type="STRING" id="357809.Cphy_0448"/>
<dbReference type="KEGG" id="cpy:Cphy_0448"/>
<dbReference type="eggNOG" id="COG0291">
    <property type="taxonomic scope" value="Bacteria"/>
</dbReference>
<dbReference type="HOGENOM" id="CLU_169643_1_1_9"/>
<dbReference type="OrthoDB" id="47476at2"/>
<dbReference type="Proteomes" id="UP000000370">
    <property type="component" value="Chromosome"/>
</dbReference>
<dbReference type="GO" id="GO:0022625">
    <property type="term" value="C:cytosolic large ribosomal subunit"/>
    <property type="evidence" value="ECO:0007669"/>
    <property type="project" value="TreeGrafter"/>
</dbReference>
<dbReference type="GO" id="GO:0003735">
    <property type="term" value="F:structural constituent of ribosome"/>
    <property type="evidence" value="ECO:0007669"/>
    <property type="project" value="InterPro"/>
</dbReference>
<dbReference type="GO" id="GO:0006412">
    <property type="term" value="P:translation"/>
    <property type="evidence" value="ECO:0007669"/>
    <property type="project" value="UniProtKB-UniRule"/>
</dbReference>
<dbReference type="FunFam" id="4.10.410.60:FF:000001">
    <property type="entry name" value="50S ribosomal protein L35"/>
    <property type="match status" value="1"/>
</dbReference>
<dbReference type="Gene3D" id="4.10.410.60">
    <property type="match status" value="1"/>
</dbReference>
<dbReference type="HAMAP" id="MF_00514">
    <property type="entry name" value="Ribosomal_bL35"/>
    <property type="match status" value="1"/>
</dbReference>
<dbReference type="InterPro" id="IPR001706">
    <property type="entry name" value="Ribosomal_bL35"/>
</dbReference>
<dbReference type="InterPro" id="IPR021137">
    <property type="entry name" value="Ribosomal_bL35-like"/>
</dbReference>
<dbReference type="InterPro" id="IPR018265">
    <property type="entry name" value="Ribosomal_bL35_CS"/>
</dbReference>
<dbReference type="InterPro" id="IPR037229">
    <property type="entry name" value="Ribosomal_bL35_sf"/>
</dbReference>
<dbReference type="NCBIfam" id="TIGR00001">
    <property type="entry name" value="rpmI_bact"/>
    <property type="match status" value="1"/>
</dbReference>
<dbReference type="PANTHER" id="PTHR33343">
    <property type="entry name" value="54S RIBOSOMAL PROTEIN BL35M"/>
    <property type="match status" value="1"/>
</dbReference>
<dbReference type="PANTHER" id="PTHR33343:SF1">
    <property type="entry name" value="LARGE RIBOSOMAL SUBUNIT PROTEIN BL35M"/>
    <property type="match status" value="1"/>
</dbReference>
<dbReference type="Pfam" id="PF01632">
    <property type="entry name" value="Ribosomal_L35p"/>
    <property type="match status" value="1"/>
</dbReference>
<dbReference type="PRINTS" id="PR00064">
    <property type="entry name" value="RIBOSOMALL35"/>
</dbReference>
<dbReference type="SUPFAM" id="SSF143034">
    <property type="entry name" value="L35p-like"/>
    <property type="match status" value="1"/>
</dbReference>
<dbReference type="PROSITE" id="PS00936">
    <property type="entry name" value="RIBOSOMAL_L35"/>
    <property type="match status" value="1"/>
</dbReference>
<gene>
    <name evidence="1" type="primary">rpmI</name>
    <name type="ordered locus">Cphy_0448</name>
</gene>
<feature type="chain" id="PRO_1000081603" description="Large ribosomal subunit protein bL35">
    <location>
        <begin position="1"/>
        <end position="65"/>
    </location>
</feature>
<feature type="region of interest" description="Disordered" evidence="2">
    <location>
        <begin position="23"/>
        <end position="44"/>
    </location>
</feature>
<protein>
    <recommendedName>
        <fullName evidence="1">Large ribosomal subunit protein bL35</fullName>
    </recommendedName>
    <alternativeName>
        <fullName evidence="3">50S ribosomal protein L35</fullName>
    </alternativeName>
</protein>
<name>RL35_LACP7</name>
<reference key="1">
    <citation type="submission" date="2007-11" db="EMBL/GenBank/DDBJ databases">
        <title>Complete genome sequence of Clostridium phytofermentans ISDg.</title>
        <authorList>
            <person name="Leschine S.B."/>
            <person name="Warnick T.A."/>
            <person name="Blanchard J.L."/>
            <person name="Schnell D.J."/>
            <person name="Petit E.L."/>
            <person name="LaTouf W.G."/>
            <person name="Copeland A."/>
            <person name="Lucas S."/>
            <person name="Lapidus A."/>
            <person name="Barry K."/>
            <person name="Glavina del Rio T."/>
            <person name="Dalin E."/>
            <person name="Tice H."/>
            <person name="Pitluck S."/>
            <person name="Kiss H."/>
            <person name="Brettin T."/>
            <person name="Bruce D."/>
            <person name="Detter J.C."/>
            <person name="Han C."/>
            <person name="Kuske C."/>
            <person name="Schmutz J."/>
            <person name="Larimer F."/>
            <person name="Land M."/>
            <person name="Hauser L."/>
            <person name="Kyrpides N."/>
            <person name="Kim E.A."/>
            <person name="Richardson P."/>
        </authorList>
    </citation>
    <scope>NUCLEOTIDE SEQUENCE [LARGE SCALE GENOMIC DNA]</scope>
    <source>
        <strain>ATCC 700394 / DSM 18823 / ISDg</strain>
    </source>
</reference>
<keyword id="KW-1185">Reference proteome</keyword>
<keyword id="KW-0687">Ribonucleoprotein</keyword>
<keyword id="KW-0689">Ribosomal protein</keyword>
<accession>A9KHG8</accession>